<protein>
    <recommendedName>
        <fullName>Subtilisin-like protease 5</fullName>
        <ecNumber>3.4.21.-</ecNumber>
    </recommendedName>
</protein>
<reference key="1">
    <citation type="journal article" date="2012" name="MBio">
        <title>Comparative genome analysis of Trichophyton rubrum and related dermatophytes reveals candidate genes involved in infection.</title>
        <authorList>
            <person name="Martinez D.A."/>
            <person name="Oliver B.G."/>
            <person name="Graeser Y."/>
            <person name="Goldberg J.M."/>
            <person name="Li W."/>
            <person name="Martinez-Rossi N.M."/>
            <person name="Monod M."/>
            <person name="Shelest E."/>
            <person name="Barton R.C."/>
            <person name="Birch E."/>
            <person name="Brakhage A.A."/>
            <person name="Chen Z."/>
            <person name="Gurr S.J."/>
            <person name="Heiman D."/>
            <person name="Heitman J."/>
            <person name="Kosti I."/>
            <person name="Rossi A."/>
            <person name="Saif S."/>
            <person name="Samalova M."/>
            <person name="Saunders C.W."/>
            <person name="Shea T."/>
            <person name="Summerbell R.C."/>
            <person name="Xu J."/>
            <person name="Young S."/>
            <person name="Zeng Q."/>
            <person name="Birren B.W."/>
            <person name="Cuomo C.A."/>
            <person name="White T.C."/>
        </authorList>
    </citation>
    <scope>NUCLEOTIDE SEQUENCE [LARGE SCALE GENOMIC DNA]</scope>
    <source>
        <strain>ATCC MYA-4604 / CBS 118893</strain>
    </source>
</reference>
<sequence length="396" mass="41978">MTGFLTILSLSLAALSVTNAAQILSVPQGAEVVPNGYIVVMKDDTSEQDFSSHRAWVSNIHHNVTRRGLNGEGVKETYDFDNVRGYSGIFDKDTIKDISNDPKVAFVEPDAIIKQHVFVQQRKAPWGLSRLSNRRGGRNYVFDSTAGNGVWAYVVDSGVDIHHSEFQGRAIWGSNLVDNKNSDGTGHGTHVAGTIAGKTYGIAKKAKIIAVKVLDSEGKGPTSGIIAGINWSIKHARQHGKLQKSVLNMSLGGSYSAGLNHVTARAIKAGMFVSVSAGNDNINSNNNSPASERSVCTIAASTENDGKASFSNWGPAVDLYAPGHNILSARPGGGSQTMSGTSMAAPHAAGVAAYLIAKEGIPGDRVCLRLKQLSRPTIRNPGPDTTSRLLYNGSGR</sequence>
<proteinExistence type="inferred from homology"/>
<name>SUB5_ARTGP</name>
<gene>
    <name type="primary">SUB5</name>
    <name type="ORF">MGYG_07290</name>
</gene>
<evidence type="ECO:0000250" key="1"/>
<evidence type="ECO:0000255" key="2"/>
<evidence type="ECO:0000255" key="3">
    <source>
        <dbReference type="PROSITE-ProRule" id="PRU01240"/>
    </source>
</evidence>
<evidence type="ECO:0000256" key="4">
    <source>
        <dbReference type="SAM" id="MobiDB-lite"/>
    </source>
</evidence>
<evidence type="ECO:0000305" key="5"/>
<keyword id="KW-0325">Glycoprotein</keyword>
<keyword id="KW-0378">Hydrolase</keyword>
<keyword id="KW-0645">Protease</keyword>
<keyword id="KW-1185">Reference proteome</keyword>
<keyword id="KW-0964">Secreted</keyword>
<keyword id="KW-0720">Serine protease</keyword>
<keyword id="KW-0732">Signal</keyword>
<keyword id="KW-0843">Virulence</keyword>
<keyword id="KW-0865">Zymogen</keyword>
<organism>
    <name type="scientific">Arthroderma gypseum (strain ATCC MYA-4604 / CBS 118893)</name>
    <name type="common">Microsporum gypseum</name>
    <dbReference type="NCBI Taxonomy" id="535722"/>
    <lineage>
        <taxon>Eukaryota</taxon>
        <taxon>Fungi</taxon>
        <taxon>Dikarya</taxon>
        <taxon>Ascomycota</taxon>
        <taxon>Pezizomycotina</taxon>
        <taxon>Eurotiomycetes</taxon>
        <taxon>Eurotiomycetidae</taxon>
        <taxon>Onygenales</taxon>
        <taxon>Arthrodermataceae</taxon>
        <taxon>Nannizzia</taxon>
    </lineage>
</organism>
<accession>E4V2L6</accession>
<comment type="function">
    <text evidence="1">Secreted subtilisin-like serine protease with keratinolytic activity that contributes to pathogenicity.</text>
</comment>
<comment type="subcellular location">
    <subcellularLocation>
        <location evidence="1">Secreted</location>
    </subcellularLocation>
</comment>
<comment type="similarity">
    <text evidence="5">Belongs to the peptidase S8 family.</text>
</comment>
<feature type="signal peptide" evidence="2">
    <location>
        <begin position="1"/>
        <end position="20"/>
    </location>
</feature>
<feature type="chain" id="PRO_0000406372" description="Subtilisin-like protease 5">
    <location>
        <begin position="21"/>
        <end position="396"/>
    </location>
</feature>
<feature type="propeptide" id="PRO_0000406373" evidence="1">
    <location>
        <begin position="21"/>
        <end position="116"/>
    </location>
</feature>
<feature type="domain" description="Inhibitor I9" evidence="2">
    <location>
        <begin position="37"/>
        <end position="114"/>
    </location>
</feature>
<feature type="domain" description="Peptidase S8" evidence="3">
    <location>
        <begin position="125"/>
        <end position="396"/>
    </location>
</feature>
<feature type="region of interest" description="Disordered" evidence="4">
    <location>
        <begin position="376"/>
        <end position="396"/>
    </location>
</feature>
<feature type="active site" description="Charge relay system" evidence="3">
    <location>
        <position position="156"/>
    </location>
</feature>
<feature type="active site" description="Charge relay system" evidence="3">
    <location>
        <position position="187"/>
    </location>
</feature>
<feature type="active site" description="Charge relay system" evidence="3">
    <location>
        <position position="342"/>
    </location>
</feature>
<feature type="glycosylation site" description="N-linked (GlcNAc...) asparagine" evidence="2">
    <location>
        <position position="230"/>
    </location>
</feature>
<feature type="glycosylation site" description="N-linked (GlcNAc...) asparagine" evidence="2">
    <location>
        <position position="248"/>
    </location>
</feature>
<feature type="glycosylation site" description="N-linked (GlcNAc...) asparagine" evidence="2">
    <location>
        <position position="392"/>
    </location>
</feature>
<dbReference type="EC" id="3.4.21.-"/>
<dbReference type="EMBL" id="DS989827">
    <property type="protein sequence ID" value="EFR04281.1"/>
    <property type="molecule type" value="Genomic_DNA"/>
</dbReference>
<dbReference type="RefSeq" id="XP_003171289.1">
    <property type="nucleotide sequence ID" value="XM_003171241.1"/>
</dbReference>
<dbReference type="SMR" id="E4V2L6"/>
<dbReference type="STRING" id="535722.E4V2L6"/>
<dbReference type="GlyCosmos" id="E4V2L6">
    <property type="glycosylation" value="3 sites, No reported glycans"/>
</dbReference>
<dbReference type="GeneID" id="10026539"/>
<dbReference type="VEuPathDB" id="FungiDB:MGYG_07290"/>
<dbReference type="eggNOG" id="KOG1153">
    <property type="taxonomic scope" value="Eukaryota"/>
</dbReference>
<dbReference type="HOGENOM" id="CLU_011263_1_3_1"/>
<dbReference type="InParanoid" id="E4V2L6"/>
<dbReference type="OMA" id="DLYAPGH"/>
<dbReference type="OrthoDB" id="206201at2759"/>
<dbReference type="Proteomes" id="UP000002669">
    <property type="component" value="Unassembled WGS sequence"/>
</dbReference>
<dbReference type="GO" id="GO:0005576">
    <property type="term" value="C:extracellular region"/>
    <property type="evidence" value="ECO:0007669"/>
    <property type="project" value="UniProtKB-SubCell"/>
</dbReference>
<dbReference type="GO" id="GO:0004252">
    <property type="term" value="F:serine-type endopeptidase activity"/>
    <property type="evidence" value="ECO:0007669"/>
    <property type="project" value="InterPro"/>
</dbReference>
<dbReference type="GO" id="GO:0006508">
    <property type="term" value="P:proteolysis"/>
    <property type="evidence" value="ECO:0007669"/>
    <property type="project" value="UniProtKB-KW"/>
</dbReference>
<dbReference type="CDD" id="cd04077">
    <property type="entry name" value="Peptidases_S8_PCSK9_ProteinaseK_like"/>
    <property type="match status" value="1"/>
</dbReference>
<dbReference type="FunFam" id="3.40.50.200:FF:000007">
    <property type="entry name" value="Subtilisin-like serine protease"/>
    <property type="match status" value="1"/>
</dbReference>
<dbReference type="Gene3D" id="3.30.70.80">
    <property type="entry name" value="Peptidase S8 propeptide/proteinase inhibitor I9"/>
    <property type="match status" value="1"/>
</dbReference>
<dbReference type="Gene3D" id="3.40.50.200">
    <property type="entry name" value="Peptidase S8/S53 domain"/>
    <property type="match status" value="1"/>
</dbReference>
<dbReference type="InterPro" id="IPR034193">
    <property type="entry name" value="PCSK9_ProteinaseK-like"/>
</dbReference>
<dbReference type="InterPro" id="IPR000209">
    <property type="entry name" value="Peptidase_S8/S53_dom"/>
</dbReference>
<dbReference type="InterPro" id="IPR036852">
    <property type="entry name" value="Peptidase_S8/S53_dom_sf"/>
</dbReference>
<dbReference type="InterPro" id="IPR023827">
    <property type="entry name" value="Peptidase_S8_Asp-AS"/>
</dbReference>
<dbReference type="InterPro" id="IPR022398">
    <property type="entry name" value="Peptidase_S8_His-AS"/>
</dbReference>
<dbReference type="InterPro" id="IPR023828">
    <property type="entry name" value="Peptidase_S8_Ser-AS"/>
</dbReference>
<dbReference type="InterPro" id="IPR050131">
    <property type="entry name" value="Peptidase_S8_subtilisin-like"/>
</dbReference>
<dbReference type="InterPro" id="IPR015500">
    <property type="entry name" value="Peptidase_S8_subtilisin-rel"/>
</dbReference>
<dbReference type="InterPro" id="IPR010259">
    <property type="entry name" value="S8pro/Inhibitor_I9"/>
</dbReference>
<dbReference type="InterPro" id="IPR037045">
    <property type="entry name" value="S8pro/Inhibitor_I9_sf"/>
</dbReference>
<dbReference type="PANTHER" id="PTHR43806:SF11">
    <property type="entry name" value="CEREVISIN-RELATED"/>
    <property type="match status" value="1"/>
</dbReference>
<dbReference type="PANTHER" id="PTHR43806">
    <property type="entry name" value="PEPTIDASE S8"/>
    <property type="match status" value="1"/>
</dbReference>
<dbReference type="Pfam" id="PF05922">
    <property type="entry name" value="Inhibitor_I9"/>
    <property type="match status" value="1"/>
</dbReference>
<dbReference type="Pfam" id="PF00082">
    <property type="entry name" value="Peptidase_S8"/>
    <property type="match status" value="1"/>
</dbReference>
<dbReference type="PRINTS" id="PR00723">
    <property type="entry name" value="SUBTILISIN"/>
</dbReference>
<dbReference type="SUPFAM" id="SSF54897">
    <property type="entry name" value="Protease propeptides/inhibitors"/>
    <property type="match status" value="1"/>
</dbReference>
<dbReference type="SUPFAM" id="SSF52743">
    <property type="entry name" value="Subtilisin-like"/>
    <property type="match status" value="1"/>
</dbReference>
<dbReference type="PROSITE" id="PS51892">
    <property type="entry name" value="SUBTILASE"/>
    <property type="match status" value="1"/>
</dbReference>
<dbReference type="PROSITE" id="PS00136">
    <property type="entry name" value="SUBTILASE_ASP"/>
    <property type="match status" value="1"/>
</dbReference>
<dbReference type="PROSITE" id="PS00137">
    <property type="entry name" value="SUBTILASE_HIS"/>
    <property type="match status" value="1"/>
</dbReference>
<dbReference type="PROSITE" id="PS00138">
    <property type="entry name" value="SUBTILASE_SER"/>
    <property type="match status" value="1"/>
</dbReference>